<accession>Q96MA6</accession>
<accession>A8K821</accession>
<accession>Q8N9W9</accession>
<comment type="function">
    <text evidence="2 3">Nucleoside monophosphate (NMP) kinase that catalyzes the reversible transfer of the terminal phosphate group between nucleoside triphosphates and monophosphates. Has highest activity toward AMP, and weaker activity toward dAMP, CMP and dCMP. Also displays broad nucleoside diphosphate kinase activity.</text>
</comment>
<comment type="catalytic activity">
    <reaction evidence="2">
        <text>AMP + ATP = 2 ADP</text>
        <dbReference type="Rhea" id="RHEA:12973"/>
        <dbReference type="ChEBI" id="CHEBI:30616"/>
        <dbReference type="ChEBI" id="CHEBI:456215"/>
        <dbReference type="ChEBI" id="CHEBI:456216"/>
        <dbReference type="EC" id="2.7.4.3"/>
    </reaction>
</comment>
<comment type="catalytic activity">
    <reaction evidence="2 3">
        <text>a 2'-deoxyribonucleoside 5'-diphosphate + ATP = a 2'-deoxyribonucleoside 5'-triphosphate + ADP</text>
        <dbReference type="Rhea" id="RHEA:44640"/>
        <dbReference type="ChEBI" id="CHEBI:30616"/>
        <dbReference type="ChEBI" id="CHEBI:61560"/>
        <dbReference type="ChEBI" id="CHEBI:73316"/>
        <dbReference type="ChEBI" id="CHEBI:456216"/>
        <dbReference type="EC" id="2.7.4.6"/>
    </reaction>
</comment>
<comment type="catalytic activity">
    <reaction evidence="2 3">
        <text>a ribonucleoside 5'-diphosphate + ATP = a ribonucleoside 5'-triphosphate + ADP</text>
        <dbReference type="Rhea" id="RHEA:18113"/>
        <dbReference type="ChEBI" id="CHEBI:30616"/>
        <dbReference type="ChEBI" id="CHEBI:57930"/>
        <dbReference type="ChEBI" id="CHEBI:61557"/>
        <dbReference type="ChEBI" id="CHEBI:456216"/>
        <dbReference type="EC" id="2.7.4.6"/>
    </reaction>
</comment>
<comment type="biophysicochemical properties">
    <kinetics>
        <KM evidence="2">4.1 uM for AMP</KM>
        <KM evidence="2">630 uM for dAMP</KM>
        <KM evidence="2">1.4 uM for CMP</KM>
        <Vmax evidence="2">2400.0 pmol/min/ug enzyme with AMP as substrate</Vmax>
        <Vmax evidence="2">1360.0 pmol/min/ug enzyme with dAMP as substrate</Vmax>
        <Vmax evidence="2">190.0 pmol/min/ug enzyme with CMP as substrate</Vmax>
    </kinetics>
</comment>
<comment type="subunit">
    <text evidence="4">Interacts with CFAP45 and CFAP52; CFAP45 and AK8 dimerization may create a cavity at the interface of the dimer that can accommodate AMP.</text>
</comment>
<comment type="interaction">
    <interactant intactId="EBI-8466265">
        <id>Q96MA6</id>
    </interactant>
    <interactant intactId="EBI-6658697">
        <id>Q96Q83</id>
        <label>ALKBH3</label>
    </interactant>
    <organismsDiffer>false</organismsDiffer>
    <experiments>3</experiments>
</comment>
<comment type="interaction">
    <interactant intactId="EBI-8466265">
        <id>Q96MA6</id>
    </interactant>
    <interactant intactId="EBI-718729">
        <id>P55212</id>
        <label>CASP6</label>
    </interactant>
    <organismsDiffer>false</organismsDiffer>
    <experiments>3</experiments>
</comment>
<comment type="interaction">
    <interactant intactId="EBI-8466265">
        <id>Q96MA6</id>
    </interactant>
    <interactant intactId="EBI-10171570">
        <id>Q68D86</id>
        <label>CCDC102B</label>
    </interactant>
    <organismsDiffer>false</organismsDiffer>
    <experiments>3</experiments>
</comment>
<comment type="interaction">
    <interactant intactId="EBI-8466265">
        <id>Q96MA6</id>
    </interactant>
    <interactant intactId="EBI-746238">
        <id>Q07002</id>
        <label>CDK18</label>
    </interactant>
    <organismsDiffer>false</organismsDiffer>
    <experiments>3</experiments>
</comment>
<comment type="interaction">
    <interactant intactId="EBI-8466265">
        <id>Q96MA6</id>
    </interactant>
    <interactant intactId="EBI-1050897">
        <id>P26441</id>
        <label>CNTF</label>
    </interactant>
    <organismsDiffer>false</organismsDiffer>
    <experiments>3</experiments>
</comment>
<comment type="interaction">
    <interactant intactId="EBI-8466265">
        <id>Q96MA6</id>
    </interactant>
    <interactant intactId="EBI-395638">
        <id>O14645</id>
        <label>DNALI1</label>
    </interactant>
    <organismsDiffer>false</organismsDiffer>
    <experiments>3</experiments>
</comment>
<comment type="interaction">
    <interactant intactId="EBI-8466265">
        <id>Q96MA6</id>
    </interactant>
    <interactant intactId="EBI-744973">
        <id>Q9C005</id>
        <label>DPY30</label>
    </interactant>
    <organismsDiffer>false</organismsDiffer>
    <experiments>3</experiments>
</comment>
<comment type="interaction">
    <interactant intactId="EBI-8466265">
        <id>Q96MA6</id>
    </interactant>
    <interactant intactId="EBI-25852368">
        <id>O75460-2</id>
        <label>ERN1</label>
    </interactant>
    <organismsDiffer>false</organismsDiffer>
    <experiments>3</experiments>
</comment>
<comment type="interaction">
    <interactant intactId="EBI-8466265">
        <id>Q96MA6</id>
    </interactant>
    <interactant intactId="EBI-10226858">
        <id>Q0VDC6</id>
        <label>FKBP1A</label>
    </interactant>
    <organismsDiffer>false</organismsDiffer>
    <experiments>3</experiments>
</comment>
<comment type="interaction">
    <interactant intactId="EBI-8466265">
        <id>Q96MA6</id>
    </interactant>
    <interactant intactId="EBI-2514791">
        <id>Q96CS2</id>
        <label>HAUS1</label>
    </interactant>
    <organismsDiffer>false</organismsDiffer>
    <experiments>3</experiments>
</comment>
<comment type="interaction">
    <interactant intactId="EBI-8466265">
        <id>Q96MA6</id>
    </interactant>
    <interactant intactId="EBI-473886">
        <id>O00291</id>
        <label>HIP1</label>
    </interactant>
    <organismsDiffer>false</organismsDiffer>
    <experiments>3</experiments>
</comment>
<comment type="interaction">
    <interactant intactId="EBI-8466265">
        <id>Q96MA6</id>
    </interactant>
    <interactant intactId="EBI-356991">
        <id>P54652</id>
        <label>HSPA2</label>
    </interactant>
    <organismsDiffer>false</organismsDiffer>
    <experiments>3</experiments>
</comment>
<comment type="interaction">
    <interactant intactId="EBI-8466265">
        <id>Q96MA6</id>
    </interactant>
    <interactant intactId="EBI-948266">
        <id>O14901</id>
        <label>KLF11</label>
    </interactant>
    <organismsDiffer>false</organismsDiffer>
    <experiments>3</experiments>
</comment>
<comment type="interaction">
    <interactant intactId="EBI-8466265">
        <id>Q96MA6</id>
    </interactant>
    <interactant intactId="EBI-21591415">
        <id>P13473-2</id>
        <label>LAMP2</label>
    </interactant>
    <organismsDiffer>false</organismsDiffer>
    <experiments>3</experiments>
</comment>
<comment type="interaction">
    <interactant intactId="EBI-8466265">
        <id>Q96MA6</id>
    </interactant>
    <interactant intactId="EBI-10215880">
        <id>P57077-4</id>
        <label>MAP3K7CL</label>
    </interactant>
    <organismsDiffer>false</organismsDiffer>
    <experiments>6</experiments>
</comment>
<comment type="interaction">
    <interactant intactId="EBI-8466265">
        <id>Q96MA6</id>
    </interactant>
    <interactant intactId="EBI-355924">
        <id>P33993</id>
        <label>MCM7</label>
    </interactant>
    <organismsDiffer>false</organismsDiffer>
    <experiments>4</experiments>
</comment>
<comment type="interaction">
    <interactant intactId="EBI-8466265">
        <id>Q96MA6</id>
    </interactant>
    <interactant intactId="EBI-750096">
        <id>Q9NPA3</id>
        <label>MID1IP1</label>
    </interactant>
    <organismsDiffer>false</organismsDiffer>
    <experiments>3</experiments>
</comment>
<comment type="interaction">
    <interactant intactId="EBI-8466265">
        <id>Q96MA6</id>
    </interactant>
    <interactant intactId="EBI-286642">
        <id>P62826</id>
        <label>RAN</label>
    </interactant>
    <organismsDiffer>false</organismsDiffer>
    <experiments>3</experiments>
</comment>
<comment type="interaction">
    <interactant intactId="EBI-8466265">
        <id>Q96MA6</id>
    </interactant>
    <interactant intactId="EBI-395290">
        <id>Q14498</id>
        <label>RBM39</label>
    </interactant>
    <organismsDiffer>false</organismsDiffer>
    <experiments>3</experiments>
</comment>
<comment type="interaction">
    <interactant intactId="EBI-8466265">
        <id>Q96MA6</id>
    </interactant>
    <interactant intactId="EBI-6654703">
        <id>Q14498-3</id>
        <label>RBM39</label>
    </interactant>
    <organismsDiffer>false</organismsDiffer>
    <experiments>3</experiments>
</comment>
<comment type="interaction">
    <interactant intactId="EBI-8466265">
        <id>Q96MA6</id>
    </interactant>
    <interactant intactId="EBI-2623095">
        <id>Q9Y371</id>
        <label>SH3GLB1</label>
    </interactant>
    <organismsDiffer>false</organismsDiffer>
    <experiments>3</experiments>
</comment>
<comment type="interaction">
    <interactant intactId="EBI-8466265">
        <id>Q96MA6</id>
    </interactant>
    <interactant intactId="EBI-2872322">
        <id>Q9H0W8</id>
        <label>SMG9</label>
    </interactant>
    <organismsDiffer>false</organismsDiffer>
    <experiments>3</experiments>
</comment>
<comment type="interaction">
    <interactant intactId="EBI-8466265">
        <id>Q96MA6</id>
    </interactant>
    <interactant intactId="EBI-745392">
        <id>Q9BSW7</id>
        <label>SYT17</label>
    </interactant>
    <organismsDiffer>false</organismsDiffer>
    <experiments>3</experiments>
</comment>
<comment type="interaction">
    <interactant intactId="EBI-8466265">
        <id>Q96MA6</id>
    </interactant>
    <interactant intactId="EBI-720977">
        <id>Q9H832</id>
        <label>UBE2Z</label>
    </interactant>
    <organismsDiffer>false</organismsDiffer>
    <experiments>3</experiments>
</comment>
<comment type="interaction">
    <interactant intactId="EBI-8466265">
        <id>Q96MA6</id>
    </interactant>
    <interactant intactId="EBI-2682299">
        <id>Q96NC0</id>
        <label>ZMAT2</label>
    </interactant>
    <organismsDiffer>false</organismsDiffer>
    <experiments>3</experiments>
</comment>
<comment type="subcellular location">
    <subcellularLocation>
        <location evidence="2">Cytoplasm</location>
        <location evidence="2">Cytosol</location>
    </subcellularLocation>
    <subcellularLocation>
        <location evidence="4">Cytoplasm</location>
        <location evidence="4">Cytoskeleton</location>
        <location evidence="4">Cilium axoneme</location>
    </subcellularLocation>
    <text evidence="4">Located in the proximal region of respiratory cilia.</text>
</comment>
<comment type="alternative products">
    <event type="alternative splicing"/>
    <isoform>
        <id>Q96MA6-1</id>
        <name>1</name>
        <sequence type="displayed"/>
    </isoform>
    <isoform>
        <id>Q96MA6-2</id>
        <name>2</name>
        <sequence type="described" ref="VSP_023419"/>
    </isoform>
</comment>
<comment type="tissue specificity">
    <text evidence="4">Expressed in respiratory cells (at protein level).</text>
</comment>
<comment type="similarity">
    <text evidence="6">Belongs to the adenylate kinase family.</text>
</comment>
<gene>
    <name type="primary">AK8</name>
    <name type="synonym">C9orf98</name>
</gene>
<organism>
    <name type="scientific">Homo sapiens</name>
    <name type="common">Human</name>
    <dbReference type="NCBI Taxonomy" id="9606"/>
    <lineage>
        <taxon>Eukaryota</taxon>
        <taxon>Metazoa</taxon>
        <taxon>Chordata</taxon>
        <taxon>Craniata</taxon>
        <taxon>Vertebrata</taxon>
        <taxon>Euteleostomi</taxon>
        <taxon>Mammalia</taxon>
        <taxon>Eutheria</taxon>
        <taxon>Euarchontoglires</taxon>
        <taxon>Primates</taxon>
        <taxon>Haplorrhini</taxon>
        <taxon>Catarrhini</taxon>
        <taxon>Hominidae</taxon>
        <taxon>Homo</taxon>
    </lineage>
</organism>
<sequence length="479" mass="54926">MDATIAPHRIPPEMPQYGEENHIFELMQNMLEQLLIHQPEDPIPFMIQHLHRDNDNVPRIVILGPPASGKTTIAMWLCKHLNSSLLTLENLILNEFSYTATEARRLYLQRKTVPSALLVQLIQERLAEEDCIKQGWILDGIPETREQALRIQTLGITPRHVIVLSAPDTVLIERNLGKRIDPQTGEIYHTTFDWPPESEIQNRLMVPEDISELETAQKLLEYHRNIVRVIPSYPKILKVISADQPCVDVFYQALTYVQSNHRTNAPFTPRVLLLGPVGSGKSLQAALLAQKYRLVNVCCGQLLKEAVADRTTFGELIQPFFEKEMAVPDSLLMKVLSQRLDQQDCIQKGWVLHGVPRDLDQAHLLNRLGYNPNRVFFLNVPFDSIMERLTLRRIDPVTGERYHLMYKPPPTMEIQARLLQNPKDAEEQVKLKMDLFYRNSADLEQLYGSAITLNGDQDPYTVFEYIESGIINPLPKKIP</sequence>
<reference key="1">
    <citation type="journal article" date="2004" name="Nat. Genet.">
        <title>Complete sequencing and characterization of 21,243 full-length human cDNAs.</title>
        <authorList>
            <person name="Ota T."/>
            <person name="Suzuki Y."/>
            <person name="Nishikawa T."/>
            <person name="Otsuki T."/>
            <person name="Sugiyama T."/>
            <person name="Irie R."/>
            <person name="Wakamatsu A."/>
            <person name="Hayashi K."/>
            <person name="Sato H."/>
            <person name="Nagai K."/>
            <person name="Kimura K."/>
            <person name="Makita H."/>
            <person name="Sekine M."/>
            <person name="Obayashi M."/>
            <person name="Nishi T."/>
            <person name="Shibahara T."/>
            <person name="Tanaka T."/>
            <person name="Ishii S."/>
            <person name="Yamamoto J."/>
            <person name="Saito K."/>
            <person name="Kawai Y."/>
            <person name="Isono Y."/>
            <person name="Nakamura Y."/>
            <person name="Nagahari K."/>
            <person name="Murakami K."/>
            <person name="Yasuda T."/>
            <person name="Iwayanagi T."/>
            <person name="Wagatsuma M."/>
            <person name="Shiratori A."/>
            <person name="Sudo H."/>
            <person name="Hosoiri T."/>
            <person name="Kaku Y."/>
            <person name="Kodaira H."/>
            <person name="Kondo H."/>
            <person name="Sugawara M."/>
            <person name="Takahashi M."/>
            <person name="Kanda K."/>
            <person name="Yokoi T."/>
            <person name="Furuya T."/>
            <person name="Kikkawa E."/>
            <person name="Omura Y."/>
            <person name="Abe K."/>
            <person name="Kamihara K."/>
            <person name="Katsuta N."/>
            <person name="Sato K."/>
            <person name="Tanikawa M."/>
            <person name="Yamazaki M."/>
            <person name="Ninomiya K."/>
            <person name="Ishibashi T."/>
            <person name="Yamashita H."/>
            <person name="Murakawa K."/>
            <person name="Fujimori K."/>
            <person name="Tanai H."/>
            <person name="Kimata M."/>
            <person name="Watanabe M."/>
            <person name="Hiraoka S."/>
            <person name="Chiba Y."/>
            <person name="Ishida S."/>
            <person name="Ono Y."/>
            <person name="Takiguchi S."/>
            <person name="Watanabe S."/>
            <person name="Yosida M."/>
            <person name="Hotuta T."/>
            <person name="Kusano J."/>
            <person name="Kanehori K."/>
            <person name="Takahashi-Fujii A."/>
            <person name="Hara H."/>
            <person name="Tanase T.-O."/>
            <person name="Nomura Y."/>
            <person name="Togiya S."/>
            <person name="Komai F."/>
            <person name="Hara R."/>
            <person name="Takeuchi K."/>
            <person name="Arita M."/>
            <person name="Imose N."/>
            <person name="Musashino K."/>
            <person name="Yuuki H."/>
            <person name="Oshima A."/>
            <person name="Sasaki N."/>
            <person name="Aotsuka S."/>
            <person name="Yoshikawa Y."/>
            <person name="Matsunawa H."/>
            <person name="Ichihara T."/>
            <person name="Shiohata N."/>
            <person name="Sano S."/>
            <person name="Moriya S."/>
            <person name="Momiyama H."/>
            <person name="Satoh N."/>
            <person name="Takami S."/>
            <person name="Terashima Y."/>
            <person name="Suzuki O."/>
            <person name="Nakagawa S."/>
            <person name="Senoh A."/>
            <person name="Mizoguchi H."/>
            <person name="Goto Y."/>
            <person name="Shimizu F."/>
            <person name="Wakebe H."/>
            <person name="Hishigaki H."/>
            <person name="Watanabe T."/>
            <person name="Sugiyama A."/>
            <person name="Takemoto M."/>
            <person name="Kawakami B."/>
            <person name="Yamazaki M."/>
            <person name="Watanabe K."/>
            <person name="Kumagai A."/>
            <person name="Itakura S."/>
            <person name="Fukuzumi Y."/>
            <person name="Fujimori Y."/>
            <person name="Komiyama M."/>
            <person name="Tashiro H."/>
            <person name="Tanigami A."/>
            <person name="Fujiwara T."/>
            <person name="Ono T."/>
            <person name="Yamada K."/>
            <person name="Fujii Y."/>
            <person name="Ozaki K."/>
            <person name="Hirao M."/>
            <person name="Ohmori Y."/>
            <person name="Kawabata A."/>
            <person name="Hikiji T."/>
            <person name="Kobatake N."/>
            <person name="Inagaki H."/>
            <person name="Ikema Y."/>
            <person name="Okamoto S."/>
            <person name="Okitani R."/>
            <person name="Kawakami T."/>
            <person name="Noguchi S."/>
            <person name="Itoh T."/>
            <person name="Shigeta K."/>
            <person name="Senba T."/>
            <person name="Matsumura K."/>
            <person name="Nakajima Y."/>
            <person name="Mizuno T."/>
            <person name="Morinaga M."/>
            <person name="Sasaki M."/>
            <person name="Togashi T."/>
            <person name="Oyama M."/>
            <person name="Hata H."/>
            <person name="Watanabe M."/>
            <person name="Komatsu T."/>
            <person name="Mizushima-Sugano J."/>
            <person name="Satoh T."/>
            <person name="Shirai Y."/>
            <person name="Takahashi Y."/>
            <person name="Nakagawa K."/>
            <person name="Okumura K."/>
            <person name="Nagase T."/>
            <person name="Nomura N."/>
            <person name="Kikuchi H."/>
            <person name="Masuho Y."/>
            <person name="Yamashita R."/>
            <person name="Nakai K."/>
            <person name="Yada T."/>
            <person name="Nakamura Y."/>
            <person name="Ohara O."/>
            <person name="Isogai T."/>
            <person name="Sugano S."/>
        </authorList>
    </citation>
    <scope>NUCLEOTIDE SEQUENCE [LARGE SCALE MRNA] (ISOFORMS 1 AND 2)</scope>
    <source>
        <tissue>Testis</tissue>
    </source>
</reference>
<reference key="2">
    <citation type="journal article" date="2004" name="Nature">
        <title>DNA sequence and analysis of human chromosome 9.</title>
        <authorList>
            <person name="Humphray S.J."/>
            <person name="Oliver K."/>
            <person name="Hunt A.R."/>
            <person name="Plumb R.W."/>
            <person name="Loveland J.E."/>
            <person name="Howe K.L."/>
            <person name="Andrews T.D."/>
            <person name="Searle S."/>
            <person name="Hunt S.E."/>
            <person name="Scott C.E."/>
            <person name="Jones M.C."/>
            <person name="Ainscough R."/>
            <person name="Almeida J.P."/>
            <person name="Ambrose K.D."/>
            <person name="Ashwell R.I.S."/>
            <person name="Babbage A.K."/>
            <person name="Babbage S."/>
            <person name="Bagguley C.L."/>
            <person name="Bailey J."/>
            <person name="Banerjee R."/>
            <person name="Barker D.J."/>
            <person name="Barlow K.F."/>
            <person name="Bates K."/>
            <person name="Beasley H."/>
            <person name="Beasley O."/>
            <person name="Bird C.P."/>
            <person name="Bray-Allen S."/>
            <person name="Brown A.J."/>
            <person name="Brown J.Y."/>
            <person name="Burford D."/>
            <person name="Burrill W."/>
            <person name="Burton J."/>
            <person name="Carder C."/>
            <person name="Carter N.P."/>
            <person name="Chapman J.C."/>
            <person name="Chen Y."/>
            <person name="Clarke G."/>
            <person name="Clark S.Y."/>
            <person name="Clee C.M."/>
            <person name="Clegg S."/>
            <person name="Collier R.E."/>
            <person name="Corby N."/>
            <person name="Crosier M."/>
            <person name="Cummings A.T."/>
            <person name="Davies J."/>
            <person name="Dhami P."/>
            <person name="Dunn M."/>
            <person name="Dutta I."/>
            <person name="Dyer L.W."/>
            <person name="Earthrowl M.E."/>
            <person name="Faulkner L."/>
            <person name="Fleming C.J."/>
            <person name="Frankish A."/>
            <person name="Frankland J.A."/>
            <person name="French L."/>
            <person name="Fricker D.G."/>
            <person name="Garner P."/>
            <person name="Garnett J."/>
            <person name="Ghori J."/>
            <person name="Gilbert J.G.R."/>
            <person name="Glison C."/>
            <person name="Grafham D.V."/>
            <person name="Gribble S."/>
            <person name="Griffiths C."/>
            <person name="Griffiths-Jones S."/>
            <person name="Grocock R."/>
            <person name="Guy J."/>
            <person name="Hall R.E."/>
            <person name="Hammond S."/>
            <person name="Harley J.L."/>
            <person name="Harrison E.S.I."/>
            <person name="Hart E.A."/>
            <person name="Heath P.D."/>
            <person name="Henderson C.D."/>
            <person name="Hopkins B.L."/>
            <person name="Howard P.J."/>
            <person name="Howden P.J."/>
            <person name="Huckle E."/>
            <person name="Johnson C."/>
            <person name="Johnson D."/>
            <person name="Joy A.A."/>
            <person name="Kay M."/>
            <person name="Keenan S."/>
            <person name="Kershaw J.K."/>
            <person name="Kimberley A.M."/>
            <person name="King A."/>
            <person name="Knights A."/>
            <person name="Laird G.K."/>
            <person name="Langford C."/>
            <person name="Lawlor S."/>
            <person name="Leongamornlert D.A."/>
            <person name="Leversha M."/>
            <person name="Lloyd C."/>
            <person name="Lloyd D.M."/>
            <person name="Lovell J."/>
            <person name="Martin S."/>
            <person name="Mashreghi-Mohammadi M."/>
            <person name="Matthews L."/>
            <person name="McLaren S."/>
            <person name="McLay K.E."/>
            <person name="McMurray A."/>
            <person name="Milne S."/>
            <person name="Nickerson T."/>
            <person name="Nisbett J."/>
            <person name="Nordsiek G."/>
            <person name="Pearce A.V."/>
            <person name="Peck A.I."/>
            <person name="Porter K.M."/>
            <person name="Pandian R."/>
            <person name="Pelan S."/>
            <person name="Phillimore B."/>
            <person name="Povey S."/>
            <person name="Ramsey Y."/>
            <person name="Rand V."/>
            <person name="Scharfe M."/>
            <person name="Sehra H.K."/>
            <person name="Shownkeen R."/>
            <person name="Sims S.K."/>
            <person name="Skuce C.D."/>
            <person name="Smith M."/>
            <person name="Steward C.A."/>
            <person name="Swarbreck D."/>
            <person name="Sycamore N."/>
            <person name="Tester J."/>
            <person name="Thorpe A."/>
            <person name="Tracey A."/>
            <person name="Tromans A."/>
            <person name="Thomas D.W."/>
            <person name="Wall M."/>
            <person name="Wallis J.M."/>
            <person name="West A.P."/>
            <person name="Whitehead S.L."/>
            <person name="Willey D.L."/>
            <person name="Williams S.A."/>
            <person name="Wilming L."/>
            <person name="Wray P.W."/>
            <person name="Young L."/>
            <person name="Ashurst J.L."/>
            <person name="Coulson A."/>
            <person name="Blocker H."/>
            <person name="Durbin R.M."/>
            <person name="Sulston J.E."/>
            <person name="Hubbard T."/>
            <person name="Jackson M.J."/>
            <person name="Bentley D.R."/>
            <person name="Beck S."/>
            <person name="Rogers J."/>
            <person name="Dunham I."/>
        </authorList>
    </citation>
    <scope>NUCLEOTIDE SEQUENCE [LARGE SCALE GENOMIC DNA]</scope>
</reference>
<reference key="3">
    <citation type="submission" date="2005-07" db="EMBL/GenBank/DDBJ databases">
        <authorList>
            <person name="Mural R.J."/>
            <person name="Istrail S."/>
            <person name="Sutton G.G."/>
            <person name="Florea L."/>
            <person name="Halpern A.L."/>
            <person name="Mobarry C.M."/>
            <person name="Lippert R."/>
            <person name="Walenz B."/>
            <person name="Shatkay H."/>
            <person name="Dew I."/>
            <person name="Miller J.R."/>
            <person name="Flanigan M.J."/>
            <person name="Edwards N.J."/>
            <person name="Bolanos R."/>
            <person name="Fasulo D."/>
            <person name="Halldorsson B.V."/>
            <person name="Hannenhalli S."/>
            <person name="Turner R."/>
            <person name="Yooseph S."/>
            <person name="Lu F."/>
            <person name="Nusskern D.R."/>
            <person name="Shue B.C."/>
            <person name="Zheng X.H."/>
            <person name="Zhong F."/>
            <person name="Delcher A.L."/>
            <person name="Huson D.H."/>
            <person name="Kravitz S.A."/>
            <person name="Mouchard L."/>
            <person name="Reinert K."/>
            <person name="Remington K.A."/>
            <person name="Clark A.G."/>
            <person name="Waterman M.S."/>
            <person name="Eichler E.E."/>
            <person name="Adams M.D."/>
            <person name="Hunkapiller M.W."/>
            <person name="Myers E.W."/>
            <person name="Venter J.C."/>
        </authorList>
    </citation>
    <scope>NUCLEOTIDE SEQUENCE [LARGE SCALE GENOMIC DNA]</scope>
</reference>
<reference key="4">
    <citation type="journal article" date="2004" name="Genome Res.">
        <title>The status, quality, and expansion of the NIH full-length cDNA project: the Mammalian Gene Collection (MGC).</title>
        <authorList>
            <consortium name="The MGC Project Team"/>
        </authorList>
    </citation>
    <scope>NUCLEOTIDE SEQUENCE [LARGE SCALE MRNA] (ISOFORM 1)</scope>
    <source>
        <tissue>Brain</tissue>
    </source>
</reference>
<reference key="5">
    <citation type="journal article" date="2011" name="Biochem. J.">
        <title>The characterization of human adenylate kinases 7 and 8 demonstrates differences in kinetic parameters and structural organization among the family of adenylate kinase isoenzymes.</title>
        <authorList>
            <person name="Panayiotou C."/>
            <person name="Solaroli N."/>
            <person name="Xu Y."/>
            <person name="Johansson M."/>
            <person name="Karlsson A."/>
        </authorList>
    </citation>
    <scope>FUNCTION</scope>
    <scope>SUBCELLULAR LOCATION</scope>
    <scope>BIOPHYSICOCHEMICAL PROPERTIES</scope>
    <scope>CATALYTIC ACTIVITY</scope>
</reference>
<reference key="6">
    <citation type="journal article" date="2013" name="Int. J. Biochem. Cell Biol.">
        <title>The human adenylate kinase 9 is a nucleoside mono- and diphosphate kinase.</title>
        <authorList>
            <person name="Amiri M."/>
            <person name="Conserva F."/>
            <person name="Panayiotou C."/>
            <person name="Karlsson A."/>
            <person name="Solaroli N."/>
        </authorList>
    </citation>
    <scope>FUNCTION</scope>
    <scope>CATALYTIC ACTIVITY</scope>
</reference>
<reference key="7">
    <citation type="journal article" date="2020" name="Nat. Commun.">
        <title>CFAP45 deficiency causes situs abnormalities and asthenospermia by disrupting an axonemal adenine nucleotide homeostasis module.</title>
        <authorList>
            <person name="Dougherty G.W."/>
            <person name="Mizuno K."/>
            <person name="Noethe-Menchen T."/>
            <person name="Ikawa Y."/>
            <person name="Boldt K."/>
            <person name="Ta-Shma A."/>
            <person name="Aprea I."/>
            <person name="Minegishi K."/>
            <person name="Pang Y.P."/>
            <person name="Pennekamp P."/>
            <person name="Loges N.T."/>
            <person name="Raidt J."/>
            <person name="Hjeij R."/>
            <person name="Wallmeier J."/>
            <person name="Mussaffi H."/>
            <person name="Perles Z."/>
            <person name="Elpeleg O."/>
            <person name="Rabert F."/>
            <person name="Shiratori H."/>
            <person name="Letteboer S.J."/>
            <person name="Horn N."/>
            <person name="Young S."/>
            <person name="Struenker T."/>
            <person name="Stumme F."/>
            <person name="Werner C."/>
            <person name="Olbrich H."/>
            <person name="Takaoka K."/>
            <person name="Ide T."/>
            <person name="Twan W.K."/>
            <person name="Biebach L."/>
            <person name="Grosse-Onnebrink J."/>
            <person name="Klinkenbusch J.A."/>
            <person name="Praveen K."/>
            <person name="Bracht D.C."/>
            <person name="Hoeben I.M."/>
            <person name="Junger K."/>
            <person name="Guetzlaff J."/>
            <person name="Cindric S."/>
            <person name="Aviram M."/>
            <person name="Kaiser T."/>
            <person name="Memari Y."/>
            <person name="Dzeja P.P."/>
            <person name="Dworniczak B."/>
            <person name="Ueffing M."/>
            <person name="Roepman R."/>
            <person name="Bartscherer K."/>
            <person name="Katsanis N."/>
            <person name="Davis E.E."/>
            <person name="Amirav I."/>
            <person name="Hamada H."/>
            <person name="Omran H."/>
        </authorList>
    </citation>
    <scope>INTERACTION WITH CFAP45 AND CFAP52</scope>
    <scope>AMP-BINDING</scope>
    <scope>SUBCELLULAR LOCATION</scope>
    <scope>TISSUE SPECIFICITY</scope>
</reference>
<name>KAD8_HUMAN</name>
<feature type="chain" id="PRO_0000279383" description="Adenylate kinase 8">
    <location>
        <begin position="1"/>
        <end position="479"/>
    </location>
</feature>
<feature type="region of interest" description="Adenylate kinase 1" evidence="7">
    <location>
        <begin position="58"/>
        <end position="258"/>
    </location>
</feature>
<feature type="region of interest" description="NMP 1" evidence="1">
    <location>
        <begin position="87"/>
        <end position="113"/>
    </location>
</feature>
<feature type="region of interest" description="LID 1" evidence="1">
    <location>
        <begin position="177"/>
        <end position="206"/>
    </location>
</feature>
<feature type="region of interest" description="Adenylate kinase 2" evidence="7">
    <location>
        <begin position="269"/>
        <end position="471"/>
    </location>
</feature>
<feature type="region of interest" description="NMP 2" evidence="1">
    <location>
        <begin position="298"/>
        <end position="327"/>
    </location>
</feature>
<feature type="region of interest" description="LID 2" evidence="1">
    <location>
        <begin position="391"/>
        <end position="424"/>
    </location>
</feature>
<feature type="binding site" evidence="1">
    <location>
        <begin position="67"/>
        <end position="72"/>
    </location>
    <ligand>
        <name>ATP</name>
        <dbReference type="ChEBI" id="CHEBI:30616"/>
        <label>1</label>
    </ligand>
</feature>
<feature type="binding site" evidence="1">
    <location>
        <begin position="140"/>
        <end position="143"/>
    </location>
    <ligand>
        <name>AMP</name>
        <dbReference type="ChEBI" id="CHEBI:456215"/>
        <label>1</label>
    </ligand>
</feature>
<feature type="binding site" evidence="1">
    <location>
        <position position="147"/>
    </location>
    <ligand>
        <name>AMP</name>
        <dbReference type="ChEBI" id="CHEBI:456215"/>
        <label>1</label>
    </ligand>
</feature>
<feature type="binding site" evidence="1">
    <location>
        <position position="203"/>
    </location>
    <ligand>
        <name>AMP</name>
        <dbReference type="ChEBI" id="CHEBI:456215"/>
        <label>1</label>
    </ligand>
</feature>
<feature type="binding site" evidence="1">
    <location>
        <begin position="278"/>
        <end position="283"/>
    </location>
    <ligand>
        <name>ATP</name>
        <dbReference type="ChEBI" id="CHEBI:30616"/>
        <label>2</label>
    </ligand>
</feature>
<feature type="binding site" evidence="1">
    <location>
        <begin position="325"/>
        <end position="327"/>
    </location>
    <ligand>
        <name>AMP</name>
        <dbReference type="ChEBI" id="CHEBI:456215"/>
        <label>2</label>
    </ligand>
</feature>
<feature type="binding site" evidence="1">
    <location>
        <begin position="354"/>
        <end position="357"/>
    </location>
    <ligand>
        <name>AMP</name>
        <dbReference type="ChEBI" id="CHEBI:456215"/>
        <label>2</label>
    </ligand>
</feature>
<feature type="binding site" evidence="1">
    <location>
        <position position="361"/>
    </location>
    <ligand>
        <name>AMP</name>
        <dbReference type="ChEBI" id="CHEBI:456215"/>
        <label>2</label>
    </ligand>
</feature>
<feature type="binding site" evidence="1">
    <location>
        <position position="392"/>
    </location>
    <ligand>
        <name>ATP</name>
        <dbReference type="ChEBI" id="CHEBI:30616"/>
        <label>2</label>
    </ligand>
</feature>
<feature type="splice variant" id="VSP_023419" description="In isoform 2." evidence="5">
    <location>
        <begin position="1"/>
        <end position="204"/>
    </location>
</feature>
<feature type="sequence variant" id="VAR_030873" description="In dbSNP:rs2231400.">
    <original>I</original>
    <variation>T</variation>
    <location>
        <position position="5"/>
    </location>
</feature>
<feature type="sequence variant" id="VAR_030874" description="In dbSNP:rs17407084.">
    <original>D</original>
    <variation>G</variation>
    <location>
        <position position="130"/>
    </location>
</feature>
<proteinExistence type="evidence at protein level"/>
<evidence type="ECO:0000250" key="1">
    <source>
        <dbReference type="UniProtKB" id="P69441"/>
    </source>
</evidence>
<evidence type="ECO:0000269" key="2">
    <source>
    </source>
</evidence>
<evidence type="ECO:0000269" key="3">
    <source>
    </source>
</evidence>
<evidence type="ECO:0000269" key="4">
    <source>
    </source>
</evidence>
<evidence type="ECO:0000303" key="5">
    <source>
    </source>
</evidence>
<evidence type="ECO:0000305" key="6"/>
<evidence type="ECO:0000305" key="7">
    <source>
    </source>
</evidence>
<keyword id="KW-0025">Alternative splicing</keyword>
<keyword id="KW-0067">ATP-binding</keyword>
<keyword id="KW-0966">Cell projection</keyword>
<keyword id="KW-0963">Cytoplasm</keyword>
<keyword id="KW-0206">Cytoskeleton</keyword>
<keyword id="KW-0418">Kinase</keyword>
<keyword id="KW-0547">Nucleotide-binding</keyword>
<keyword id="KW-1267">Proteomics identification</keyword>
<keyword id="KW-1185">Reference proteome</keyword>
<keyword id="KW-0808">Transferase</keyword>
<dbReference type="EC" id="2.7.4.3" evidence="2"/>
<dbReference type="EC" id="2.7.4.6" evidence="2 3"/>
<dbReference type="EMBL" id="AK057266">
    <property type="protein sequence ID" value="BAB71402.1"/>
    <property type="molecule type" value="mRNA"/>
</dbReference>
<dbReference type="EMBL" id="AK093446">
    <property type="protein sequence ID" value="BAC04168.1"/>
    <property type="molecule type" value="mRNA"/>
</dbReference>
<dbReference type="EMBL" id="AK292186">
    <property type="protein sequence ID" value="BAF84875.1"/>
    <property type="molecule type" value="mRNA"/>
</dbReference>
<dbReference type="EMBL" id="AL160165">
    <property type="status" value="NOT_ANNOTATED_CDS"/>
    <property type="molecule type" value="Genomic_DNA"/>
</dbReference>
<dbReference type="EMBL" id="AL445645">
    <property type="status" value="NOT_ANNOTATED_CDS"/>
    <property type="molecule type" value="Genomic_DNA"/>
</dbReference>
<dbReference type="EMBL" id="CH471090">
    <property type="protein sequence ID" value="EAW88016.1"/>
    <property type="molecule type" value="Genomic_DNA"/>
</dbReference>
<dbReference type="EMBL" id="BC034776">
    <property type="protein sequence ID" value="AAH34776.1"/>
    <property type="molecule type" value="mRNA"/>
</dbReference>
<dbReference type="EMBL" id="BC050576">
    <property type="protein sequence ID" value="AAH50576.1"/>
    <property type="molecule type" value="mRNA"/>
</dbReference>
<dbReference type="CCDS" id="CCDS6954.1">
    <molecule id="Q96MA6-1"/>
</dbReference>
<dbReference type="RefSeq" id="NP_001304887.1">
    <molecule id="Q96MA6-2"/>
    <property type="nucleotide sequence ID" value="NM_001317958.2"/>
</dbReference>
<dbReference type="RefSeq" id="NP_001304888.1">
    <property type="nucleotide sequence ID" value="NM_001317959.1"/>
</dbReference>
<dbReference type="RefSeq" id="NP_001358702.1">
    <molecule id="Q96MA6-2"/>
    <property type="nucleotide sequence ID" value="NM_001371773.1"/>
</dbReference>
<dbReference type="RefSeq" id="NP_001358703.1">
    <molecule id="Q96MA6-2"/>
    <property type="nucleotide sequence ID" value="NM_001371774.1"/>
</dbReference>
<dbReference type="RefSeq" id="NP_689785.1">
    <molecule id="Q96MA6-1"/>
    <property type="nucleotide sequence ID" value="NM_152572.3"/>
</dbReference>
<dbReference type="SMR" id="Q96MA6"/>
<dbReference type="BioGRID" id="127645">
    <property type="interactions" value="20"/>
</dbReference>
<dbReference type="FunCoup" id="Q96MA6">
    <property type="interactions" value="334"/>
</dbReference>
<dbReference type="IntAct" id="Q96MA6">
    <property type="interactions" value="26"/>
</dbReference>
<dbReference type="MINT" id="Q96MA6"/>
<dbReference type="STRING" id="9606.ENSP00000298545"/>
<dbReference type="DrugBank" id="DB01717">
    <property type="generic name" value="Bis(Adenosine)-5'-Pentaphosphate"/>
</dbReference>
<dbReference type="iPTMnet" id="Q96MA6"/>
<dbReference type="PhosphoSitePlus" id="Q96MA6"/>
<dbReference type="BioMuta" id="AK8"/>
<dbReference type="DMDM" id="74752032"/>
<dbReference type="MassIVE" id="Q96MA6"/>
<dbReference type="PaxDb" id="9606-ENSP00000298545"/>
<dbReference type="PeptideAtlas" id="Q96MA6"/>
<dbReference type="ProteomicsDB" id="77326">
    <molecule id="Q96MA6-1"/>
</dbReference>
<dbReference type="ProteomicsDB" id="77327">
    <molecule id="Q96MA6-2"/>
</dbReference>
<dbReference type="Antibodypedia" id="18213">
    <property type="antibodies" value="109 antibodies from 27 providers"/>
</dbReference>
<dbReference type="DNASU" id="158067"/>
<dbReference type="Ensembl" id="ENST00000298545.4">
    <molecule id="Q96MA6-1"/>
    <property type="protein sequence ID" value="ENSP00000298545.3"/>
    <property type="gene ID" value="ENSG00000165695.10"/>
</dbReference>
<dbReference type="GeneID" id="158067"/>
<dbReference type="KEGG" id="hsa:158067"/>
<dbReference type="MANE-Select" id="ENST00000298545.4">
    <property type="protein sequence ID" value="ENSP00000298545.3"/>
    <property type="RefSeq nucleotide sequence ID" value="NM_152572.3"/>
    <property type="RefSeq protein sequence ID" value="NP_689785.1"/>
</dbReference>
<dbReference type="UCSC" id="uc004cbu.2">
    <molecule id="Q96MA6-1"/>
    <property type="organism name" value="human"/>
</dbReference>
<dbReference type="AGR" id="HGNC:26526"/>
<dbReference type="CTD" id="158067"/>
<dbReference type="DisGeNET" id="158067"/>
<dbReference type="GeneCards" id="AK8"/>
<dbReference type="HGNC" id="HGNC:26526">
    <property type="gene designation" value="AK8"/>
</dbReference>
<dbReference type="HPA" id="ENSG00000165695">
    <property type="expression patterns" value="Tissue enhanced (epididymis, fallopian tube, testis)"/>
</dbReference>
<dbReference type="MIM" id="615365">
    <property type="type" value="gene"/>
</dbReference>
<dbReference type="neXtProt" id="NX_Q96MA6"/>
<dbReference type="OpenTargets" id="ENSG00000165695"/>
<dbReference type="PharmGKB" id="PA134971772"/>
<dbReference type="VEuPathDB" id="HostDB:ENSG00000165695"/>
<dbReference type="eggNOG" id="KOG3078">
    <property type="taxonomic scope" value="Eukaryota"/>
</dbReference>
<dbReference type="eggNOG" id="KOG3079">
    <property type="taxonomic scope" value="Eukaryota"/>
</dbReference>
<dbReference type="GeneTree" id="ENSGT00940000161613"/>
<dbReference type="HOGENOM" id="CLU_044905_0_0_1"/>
<dbReference type="InParanoid" id="Q96MA6"/>
<dbReference type="OMA" id="DCIRRGW"/>
<dbReference type="OrthoDB" id="522106at2759"/>
<dbReference type="PAN-GO" id="Q96MA6">
    <property type="GO annotations" value="6 GO annotations based on evolutionary models"/>
</dbReference>
<dbReference type="PhylomeDB" id="Q96MA6"/>
<dbReference type="TreeFam" id="TF328560"/>
<dbReference type="BRENDA" id="2.7.4.3">
    <property type="organism ID" value="2681"/>
</dbReference>
<dbReference type="PathwayCommons" id="Q96MA6"/>
<dbReference type="Reactome" id="R-HSA-499943">
    <property type="pathway name" value="Interconversion of nucleotide di- and triphosphates"/>
</dbReference>
<dbReference type="SABIO-RK" id="Q96MA6"/>
<dbReference type="SignaLink" id="Q96MA6"/>
<dbReference type="BioGRID-ORCS" id="158067">
    <property type="hits" value="9 hits in 1147 CRISPR screens"/>
</dbReference>
<dbReference type="ChiTaRS" id="AK8">
    <property type="organism name" value="human"/>
</dbReference>
<dbReference type="GenomeRNAi" id="158067"/>
<dbReference type="Pharos" id="Q96MA6">
    <property type="development level" value="Tbio"/>
</dbReference>
<dbReference type="PRO" id="PR:Q96MA6"/>
<dbReference type="Proteomes" id="UP000005640">
    <property type="component" value="Chromosome 9"/>
</dbReference>
<dbReference type="RNAct" id="Q96MA6">
    <property type="molecule type" value="protein"/>
</dbReference>
<dbReference type="Bgee" id="ENSG00000165695">
    <property type="expression patterns" value="Expressed in right uterine tube and 136 other cell types or tissues"/>
</dbReference>
<dbReference type="GO" id="GO:0097729">
    <property type="term" value="C:9+2 motile cilium"/>
    <property type="evidence" value="ECO:0000314"/>
    <property type="project" value="GO_Central"/>
</dbReference>
<dbReference type="GO" id="GO:0005930">
    <property type="term" value="C:axoneme"/>
    <property type="evidence" value="ECO:0007669"/>
    <property type="project" value="Ensembl"/>
</dbReference>
<dbReference type="GO" id="GO:0005737">
    <property type="term" value="C:cytoplasm"/>
    <property type="evidence" value="ECO:0000318"/>
    <property type="project" value="GO_Central"/>
</dbReference>
<dbReference type="GO" id="GO:0005829">
    <property type="term" value="C:cytosol"/>
    <property type="evidence" value="ECO:0000304"/>
    <property type="project" value="Reactome"/>
</dbReference>
<dbReference type="GO" id="GO:0036126">
    <property type="term" value="C:sperm flagellum"/>
    <property type="evidence" value="ECO:0007669"/>
    <property type="project" value="Ensembl"/>
</dbReference>
<dbReference type="GO" id="GO:0004127">
    <property type="term" value="F:(d)CMP kinase activity"/>
    <property type="evidence" value="ECO:0000314"/>
    <property type="project" value="UniProtKB"/>
</dbReference>
<dbReference type="GO" id="GO:0004017">
    <property type="term" value="F:adenylate kinase activity"/>
    <property type="evidence" value="ECO:0000314"/>
    <property type="project" value="UniProtKB"/>
</dbReference>
<dbReference type="GO" id="GO:0016208">
    <property type="term" value="F:AMP binding"/>
    <property type="evidence" value="ECO:0000314"/>
    <property type="project" value="GO_Central"/>
</dbReference>
<dbReference type="GO" id="GO:0005524">
    <property type="term" value="F:ATP binding"/>
    <property type="evidence" value="ECO:0007669"/>
    <property type="project" value="UniProtKB-KW"/>
</dbReference>
<dbReference type="GO" id="GO:0004550">
    <property type="term" value="F:nucleoside diphosphate kinase activity"/>
    <property type="evidence" value="ECO:0000314"/>
    <property type="project" value="UniProtKB"/>
</dbReference>
<dbReference type="GO" id="GO:0021591">
    <property type="term" value="P:ventricular system development"/>
    <property type="evidence" value="ECO:0007669"/>
    <property type="project" value="Ensembl"/>
</dbReference>
<dbReference type="CDD" id="cd01428">
    <property type="entry name" value="ADK"/>
    <property type="match status" value="2"/>
</dbReference>
<dbReference type="CDD" id="cd22979">
    <property type="entry name" value="DD_AK8"/>
    <property type="match status" value="1"/>
</dbReference>
<dbReference type="FunFam" id="3.40.50.300:FF:001538">
    <property type="entry name" value="Adenylate kinase 8"/>
    <property type="match status" value="1"/>
</dbReference>
<dbReference type="FunFam" id="3.40.50.300:FF:001617">
    <property type="entry name" value="Adenylate kinase 8"/>
    <property type="match status" value="1"/>
</dbReference>
<dbReference type="Gene3D" id="3.40.50.300">
    <property type="entry name" value="P-loop containing nucleotide triphosphate hydrolases"/>
    <property type="match status" value="2"/>
</dbReference>
<dbReference type="HAMAP" id="MF_00235">
    <property type="entry name" value="Adenylate_kinase_Adk"/>
    <property type="match status" value="1"/>
</dbReference>
<dbReference type="InterPro" id="IPR000850">
    <property type="entry name" value="Adenylat/UMP-CMP_kin"/>
</dbReference>
<dbReference type="InterPro" id="IPR036193">
    <property type="entry name" value="ADK_active_lid_dom_sf"/>
</dbReference>
<dbReference type="InterPro" id="IPR027417">
    <property type="entry name" value="P-loop_NTPase"/>
</dbReference>
<dbReference type="PANTHER" id="PTHR23359">
    <property type="entry name" value="NUCLEOTIDE KINASE"/>
    <property type="match status" value="1"/>
</dbReference>
<dbReference type="Pfam" id="PF00406">
    <property type="entry name" value="ADK"/>
    <property type="match status" value="2"/>
</dbReference>
<dbReference type="PRINTS" id="PR00094">
    <property type="entry name" value="ADENYLTKNASE"/>
</dbReference>
<dbReference type="SUPFAM" id="SSF57774">
    <property type="entry name" value="Microbial and mitochondrial ADK, insert 'zinc finger' domain"/>
    <property type="match status" value="2"/>
</dbReference>
<dbReference type="SUPFAM" id="SSF52540">
    <property type="entry name" value="P-loop containing nucleoside triphosphate hydrolases"/>
    <property type="match status" value="2"/>
</dbReference>
<protein>
    <recommendedName>
        <fullName>Adenylate kinase 8</fullName>
        <shortName>AK 8</shortName>
        <ecNumber evidence="2">2.7.4.3</ecNumber>
        <ecNumber evidence="2 3">2.7.4.6</ecNumber>
    </recommendedName>
    <alternativeName>
        <fullName>ATP-AMP transphosphorylase 8</fullName>
    </alternativeName>
</protein>